<gene>
    <name evidence="1" type="primary">rimM</name>
    <name type="ordered locus">NIS_1502</name>
</gene>
<sequence length="173" mass="19656">MKKLTVARLGRTVGLHGDMKLHILTDFPEQFQKGSTFESDRGSLTIESVNPARGTVKFQGIDSVDEAKKYTNAYLYSDEETTKKSFPLGEDEYFWFDILGCDVFEEGKRLGKVVDIQRLPAGDYLLVETDKSFVDMKKAKSFLIPFLDMFIEDVHLDQKRIDTKGAQDILEAS</sequence>
<evidence type="ECO:0000255" key="1">
    <source>
        <dbReference type="HAMAP-Rule" id="MF_00014"/>
    </source>
</evidence>
<dbReference type="EMBL" id="AP009178">
    <property type="protein sequence ID" value="BAF70609.1"/>
    <property type="molecule type" value="Genomic_DNA"/>
</dbReference>
<dbReference type="RefSeq" id="WP_012082872.1">
    <property type="nucleotide sequence ID" value="NC_009662.1"/>
</dbReference>
<dbReference type="SMR" id="A6Q550"/>
<dbReference type="FunCoup" id="A6Q550">
    <property type="interactions" value="363"/>
</dbReference>
<dbReference type="STRING" id="387092.NIS_1502"/>
<dbReference type="KEGG" id="nis:NIS_1502"/>
<dbReference type="eggNOG" id="COG0806">
    <property type="taxonomic scope" value="Bacteria"/>
</dbReference>
<dbReference type="HOGENOM" id="CLU_077636_2_0_7"/>
<dbReference type="InParanoid" id="A6Q550"/>
<dbReference type="OrthoDB" id="9810331at2"/>
<dbReference type="Proteomes" id="UP000001118">
    <property type="component" value="Chromosome"/>
</dbReference>
<dbReference type="GO" id="GO:0005737">
    <property type="term" value="C:cytoplasm"/>
    <property type="evidence" value="ECO:0007669"/>
    <property type="project" value="UniProtKB-SubCell"/>
</dbReference>
<dbReference type="GO" id="GO:0005840">
    <property type="term" value="C:ribosome"/>
    <property type="evidence" value="ECO:0007669"/>
    <property type="project" value="InterPro"/>
</dbReference>
<dbReference type="GO" id="GO:0043022">
    <property type="term" value="F:ribosome binding"/>
    <property type="evidence" value="ECO:0007669"/>
    <property type="project" value="InterPro"/>
</dbReference>
<dbReference type="GO" id="GO:0042274">
    <property type="term" value="P:ribosomal small subunit biogenesis"/>
    <property type="evidence" value="ECO:0007669"/>
    <property type="project" value="UniProtKB-UniRule"/>
</dbReference>
<dbReference type="GO" id="GO:0006364">
    <property type="term" value="P:rRNA processing"/>
    <property type="evidence" value="ECO:0007669"/>
    <property type="project" value="UniProtKB-UniRule"/>
</dbReference>
<dbReference type="Gene3D" id="2.30.30.240">
    <property type="entry name" value="PRC-barrel domain"/>
    <property type="match status" value="1"/>
</dbReference>
<dbReference type="Gene3D" id="2.40.30.60">
    <property type="entry name" value="RimM"/>
    <property type="match status" value="1"/>
</dbReference>
<dbReference type="HAMAP" id="MF_00014">
    <property type="entry name" value="Ribosome_mat_RimM"/>
    <property type="match status" value="1"/>
</dbReference>
<dbReference type="InterPro" id="IPR011033">
    <property type="entry name" value="PRC_barrel-like_sf"/>
</dbReference>
<dbReference type="InterPro" id="IPR056792">
    <property type="entry name" value="PRC_RimM"/>
</dbReference>
<dbReference type="InterPro" id="IPR011961">
    <property type="entry name" value="RimM"/>
</dbReference>
<dbReference type="InterPro" id="IPR002676">
    <property type="entry name" value="RimM_N"/>
</dbReference>
<dbReference type="InterPro" id="IPR036976">
    <property type="entry name" value="RimM_N_sf"/>
</dbReference>
<dbReference type="InterPro" id="IPR009000">
    <property type="entry name" value="Transl_B-barrel_sf"/>
</dbReference>
<dbReference type="NCBIfam" id="TIGR02273">
    <property type="entry name" value="16S_RimM"/>
    <property type="match status" value="1"/>
</dbReference>
<dbReference type="PANTHER" id="PTHR33692">
    <property type="entry name" value="RIBOSOME MATURATION FACTOR RIMM"/>
    <property type="match status" value="1"/>
</dbReference>
<dbReference type="PANTHER" id="PTHR33692:SF1">
    <property type="entry name" value="RIBOSOME MATURATION FACTOR RIMM"/>
    <property type="match status" value="1"/>
</dbReference>
<dbReference type="Pfam" id="PF24986">
    <property type="entry name" value="PRC_RimM"/>
    <property type="match status" value="1"/>
</dbReference>
<dbReference type="Pfam" id="PF01782">
    <property type="entry name" value="RimM"/>
    <property type="match status" value="1"/>
</dbReference>
<dbReference type="SUPFAM" id="SSF50346">
    <property type="entry name" value="PRC-barrel domain"/>
    <property type="match status" value="1"/>
</dbReference>
<dbReference type="SUPFAM" id="SSF50447">
    <property type="entry name" value="Translation proteins"/>
    <property type="match status" value="1"/>
</dbReference>
<accession>A6Q550</accession>
<comment type="function">
    <text evidence="1">An accessory protein needed during the final step in the assembly of 30S ribosomal subunit, possibly for assembly of the head region. Essential for efficient processing of 16S rRNA. May be needed both before and after RbfA during the maturation of 16S rRNA. It has affinity for free ribosomal 30S subunits but not for 70S ribosomes.</text>
</comment>
<comment type="subunit">
    <text evidence="1">Binds ribosomal protein uS19.</text>
</comment>
<comment type="subcellular location">
    <subcellularLocation>
        <location evidence="1">Cytoplasm</location>
    </subcellularLocation>
</comment>
<comment type="domain">
    <text evidence="1">The PRC barrel domain binds ribosomal protein uS19.</text>
</comment>
<comment type="similarity">
    <text evidence="1">Belongs to the RimM family.</text>
</comment>
<reference key="1">
    <citation type="journal article" date="2007" name="Proc. Natl. Acad. Sci. U.S.A.">
        <title>Deep-sea vent epsilon-proteobacterial genomes provide insights into emergence of pathogens.</title>
        <authorList>
            <person name="Nakagawa S."/>
            <person name="Takaki Y."/>
            <person name="Shimamura S."/>
            <person name="Reysenbach A.-L."/>
            <person name="Takai K."/>
            <person name="Horikoshi K."/>
        </authorList>
    </citation>
    <scope>NUCLEOTIDE SEQUENCE [LARGE SCALE GENOMIC DNA]</scope>
    <source>
        <strain>SB155-2</strain>
    </source>
</reference>
<protein>
    <recommendedName>
        <fullName evidence="1">Ribosome maturation factor RimM</fullName>
    </recommendedName>
</protein>
<name>RIMM_NITSB</name>
<proteinExistence type="inferred from homology"/>
<keyword id="KW-0143">Chaperone</keyword>
<keyword id="KW-0963">Cytoplasm</keyword>
<keyword id="KW-1185">Reference proteome</keyword>
<keyword id="KW-0690">Ribosome biogenesis</keyword>
<keyword id="KW-0698">rRNA processing</keyword>
<feature type="chain" id="PRO_0000321740" description="Ribosome maturation factor RimM">
    <location>
        <begin position="1"/>
        <end position="173"/>
    </location>
</feature>
<feature type="domain" description="PRC barrel" evidence="1">
    <location>
        <begin position="90"/>
        <end position="169"/>
    </location>
</feature>
<organism>
    <name type="scientific">Nitratiruptor sp. (strain SB155-2)</name>
    <dbReference type="NCBI Taxonomy" id="387092"/>
    <lineage>
        <taxon>Bacteria</taxon>
        <taxon>Pseudomonadati</taxon>
        <taxon>Campylobacterota</taxon>
        <taxon>Epsilonproteobacteria</taxon>
        <taxon>Nautiliales</taxon>
        <taxon>Nitratiruptoraceae</taxon>
        <taxon>Nitratiruptor</taxon>
    </lineage>
</organism>